<keyword id="KW-0150">Chloroplast</keyword>
<keyword id="KW-0472">Membrane</keyword>
<keyword id="KW-0602">Photosynthesis</keyword>
<keyword id="KW-0603">Photosystem I</keyword>
<keyword id="KW-0934">Plastid</keyword>
<keyword id="KW-1185">Reference proteome</keyword>
<keyword id="KW-0793">Thylakoid</keyword>
<keyword id="KW-0809">Transit peptide</keyword>
<gene>
    <name type="primary">psaD</name>
</gene>
<dbReference type="EMBL" id="X60008">
    <property type="protein sequence ID" value="CAA42623.1"/>
    <property type="molecule type" value="mRNA"/>
</dbReference>
<dbReference type="PIR" id="S18348">
    <property type="entry name" value="S18348"/>
</dbReference>
<dbReference type="RefSeq" id="NP_001299579.1">
    <property type="nucleotide sequence ID" value="NM_001312650.1"/>
</dbReference>
<dbReference type="RefSeq" id="XP_009795521.1">
    <property type="nucleotide sequence ID" value="XM_009797219.1"/>
</dbReference>
<dbReference type="SMR" id="P29302"/>
<dbReference type="STRING" id="4096.P29302"/>
<dbReference type="GeneID" id="104242194"/>
<dbReference type="KEGG" id="nsy:104242194"/>
<dbReference type="eggNOG" id="ENOG502QQIC">
    <property type="taxonomic scope" value="Eukaryota"/>
</dbReference>
<dbReference type="OrthoDB" id="10218at4085"/>
<dbReference type="Proteomes" id="UP000189701">
    <property type="component" value="Unplaced"/>
</dbReference>
<dbReference type="GO" id="GO:0009535">
    <property type="term" value="C:chloroplast thylakoid membrane"/>
    <property type="evidence" value="ECO:0007669"/>
    <property type="project" value="UniProtKB-SubCell"/>
</dbReference>
<dbReference type="GO" id="GO:0009538">
    <property type="term" value="C:photosystem I reaction center"/>
    <property type="evidence" value="ECO:0007669"/>
    <property type="project" value="InterPro"/>
</dbReference>
<dbReference type="GO" id="GO:0015979">
    <property type="term" value="P:photosynthesis"/>
    <property type="evidence" value="ECO:0007669"/>
    <property type="project" value="UniProtKB-KW"/>
</dbReference>
<dbReference type="FunFam" id="3.30.1470.10:FF:000002">
    <property type="entry name" value="Photosystem I reaction center subunit II"/>
    <property type="match status" value="1"/>
</dbReference>
<dbReference type="Gene3D" id="3.30.1470.10">
    <property type="entry name" value="Photosystem I PsaD, reaction center subunit II"/>
    <property type="match status" value="1"/>
</dbReference>
<dbReference type="InterPro" id="IPR003685">
    <property type="entry name" value="PsaD"/>
</dbReference>
<dbReference type="InterPro" id="IPR036579">
    <property type="entry name" value="PsaD_sf"/>
</dbReference>
<dbReference type="PANTHER" id="PTHR31982:SF5">
    <property type="entry name" value="PHOTOSYSTEM I REACTION CENTER SUBUNIT II, CHLOROPLASTIC"/>
    <property type="match status" value="1"/>
</dbReference>
<dbReference type="PANTHER" id="PTHR31982">
    <property type="entry name" value="PHOTOSYSTEM I REACTION CENTER SUBUNIT II-1, CHLOROPLASTIC-RELATED"/>
    <property type="match status" value="1"/>
</dbReference>
<dbReference type="Pfam" id="PF02531">
    <property type="entry name" value="PsaD"/>
    <property type="match status" value="1"/>
</dbReference>
<dbReference type="SUPFAM" id="SSF64234">
    <property type="entry name" value="Photosystem I subunit PsaD"/>
    <property type="match status" value="1"/>
</dbReference>
<accession>P29302</accession>
<evidence type="ECO:0000250" key="1"/>
<evidence type="ECO:0000305" key="2"/>
<protein>
    <recommendedName>
        <fullName>Photosystem I reaction center subunit II, chloroplastic</fullName>
    </recommendedName>
    <alternativeName>
        <fullName>Photosystem I 20 kDa subunit</fullName>
        <shortName>PSI-D</shortName>
    </alternativeName>
</protein>
<proteinExistence type="evidence at transcript level"/>
<organism>
    <name type="scientific">Nicotiana sylvestris</name>
    <name type="common">Wood tobacco</name>
    <name type="synonym">South American tobacco</name>
    <dbReference type="NCBI Taxonomy" id="4096"/>
    <lineage>
        <taxon>Eukaryota</taxon>
        <taxon>Viridiplantae</taxon>
        <taxon>Streptophyta</taxon>
        <taxon>Embryophyta</taxon>
        <taxon>Tracheophyta</taxon>
        <taxon>Spermatophyta</taxon>
        <taxon>Magnoliopsida</taxon>
        <taxon>eudicotyledons</taxon>
        <taxon>Gunneridae</taxon>
        <taxon>Pentapetalae</taxon>
        <taxon>asterids</taxon>
        <taxon>lamiids</taxon>
        <taxon>Solanales</taxon>
        <taxon>Solanaceae</taxon>
        <taxon>Nicotianoideae</taxon>
        <taxon>Nicotianeae</taxon>
        <taxon>Nicotiana</taxon>
    </lineage>
</organism>
<sequence length="204" mass="22424">MAMATQASLFTPALSAPKSSAPWKQSLASFSPKQLKSTVSAPRPIRAMAEEAATKEAEAPVGFTPPQLDPNTPSPIFGGSTGGLLRKAQVEEFYVITWESPKEQIFEMPTGGAAIMREGANLLKLARKEQCLALGTRLRSKYKINYRFYRVFPNGEVQYLHPKDGVYPEKVNAGRQGVGQNFRSIGKNKSPIEVKFTGKQVYDL</sequence>
<name>PSAD_NICSY</name>
<comment type="function">
    <text>PsaD can form complexes with ferredoxin and ferredoxin-oxidoreductase in photosystem I (PS I) reaction center. PSAD may encode the ferredoxin-docking protein.</text>
</comment>
<comment type="subcellular location">
    <subcellularLocation>
        <location evidence="1">Plastid</location>
        <location evidence="1">Chloroplast thylakoid membrane</location>
        <topology evidence="1">Peripheral membrane protein</topology>
        <orientation evidence="1">Stromal side</orientation>
    </subcellularLocation>
</comment>
<comment type="similarity">
    <text evidence="2">Belongs to the PsaD family.</text>
</comment>
<reference key="1">
    <citation type="journal article" date="1991" name="Plant Mol. Biol.">
        <title>Nucleotide sequence of cDNA clones encoding PSI-D2 protein of photosystem I in Nicotiana sylvestris.</title>
        <authorList>
            <person name="Yamamoto Y."/>
            <person name="Tsuji H."/>
            <person name="Hayashida N."/>
            <person name="Inoue K."/>
            <person name="Obokata J."/>
        </authorList>
    </citation>
    <scope>NUCLEOTIDE SEQUENCE [MRNA]</scope>
</reference>
<feature type="transit peptide" description="Chloroplast" evidence="1">
    <location>
        <begin position="1"/>
        <end position="48"/>
    </location>
</feature>
<feature type="chain" id="PRO_0000029376" description="Photosystem I reaction center subunit II, chloroplastic">
    <location>
        <begin position="49"/>
        <end position="204"/>
    </location>
</feature>